<gene>
    <name type="primary">hslR</name>
    <name type="synonym">yrfH</name>
    <name type="ordered locus">b3400</name>
    <name type="ordered locus">JW3363</name>
</gene>
<protein>
    <recommendedName>
        <fullName>Heat shock protein 15</fullName>
        <shortName>HSP15</shortName>
    </recommendedName>
</protein>
<dbReference type="EMBL" id="U18997">
    <property type="protein sequence ID" value="AAA58197.1"/>
    <property type="molecule type" value="Genomic_DNA"/>
</dbReference>
<dbReference type="EMBL" id="U00096">
    <property type="protein sequence ID" value="AAC76425.1"/>
    <property type="molecule type" value="Genomic_DNA"/>
</dbReference>
<dbReference type="EMBL" id="AP009048">
    <property type="protein sequence ID" value="BAE77891.1"/>
    <property type="molecule type" value="Genomic_DNA"/>
</dbReference>
<dbReference type="PIR" id="C65135">
    <property type="entry name" value="C65135"/>
</dbReference>
<dbReference type="RefSeq" id="NP_417859.1">
    <property type="nucleotide sequence ID" value="NC_000913.3"/>
</dbReference>
<dbReference type="RefSeq" id="WP_000660483.1">
    <property type="nucleotide sequence ID" value="NZ_SSZK01000008.1"/>
</dbReference>
<dbReference type="PDB" id="1DM9">
    <property type="method" value="X-ray"/>
    <property type="resolution" value="2.00 A"/>
    <property type="chains" value="A/B=1-133"/>
</dbReference>
<dbReference type="PDB" id="3BBU">
    <property type="method" value="EM"/>
    <property type="resolution" value="10.00 A"/>
    <property type="chains" value="A=5-108"/>
</dbReference>
<dbReference type="PDB" id="8AP4">
    <property type="method" value="EM"/>
    <property type="resolution" value="3.00 A"/>
    <property type="chains" value="A=1-133"/>
</dbReference>
<dbReference type="PDBsum" id="1DM9"/>
<dbReference type="PDBsum" id="3BBU"/>
<dbReference type="PDBsum" id="8AP4"/>
<dbReference type="EMDB" id="EMD-15558"/>
<dbReference type="SMR" id="P0ACG8"/>
<dbReference type="BioGRID" id="4260979">
    <property type="interactions" value="275"/>
</dbReference>
<dbReference type="BioGRID" id="852221">
    <property type="interactions" value="13"/>
</dbReference>
<dbReference type="DIP" id="DIP-48014N"/>
<dbReference type="FunCoup" id="P0ACG8">
    <property type="interactions" value="251"/>
</dbReference>
<dbReference type="IntAct" id="P0ACG8">
    <property type="interactions" value="37"/>
</dbReference>
<dbReference type="STRING" id="511145.b3400"/>
<dbReference type="jPOST" id="P0ACG8"/>
<dbReference type="PaxDb" id="511145-b3400"/>
<dbReference type="EnsemblBacteria" id="AAC76425">
    <property type="protein sequence ID" value="AAC76425"/>
    <property type="gene ID" value="b3400"/>
</dbReference>
<dbReference type="GeneID" id="93778598"/>
<dbReference type="GeneID" id="947912"/>
<dbReference type="KEGG" id="ecj:JW3363"/>
<dbReference type="KEGG" id="eco:b3400"/>
<dbReference type="KEGG" id="ecoc:C3026_18445"/>
<dbReference type="PATRIC" id="fig|1411691.4.peg.3330"/>
<dbReference type="EchoBASE" id="EB2765"/>
<dbReference type="eggNOG" id="COG1188">
    <property type="taxonomic scope" value="Bacteria"/>
</dbReference>
<dbReference type="HOGENOM" id="CLU_101003_2_1_6"/>
<dbReference type="InParanoid" id="P0ACG8"/>
<dbReference type="OMA" id="IDKYLWC"/>
<dbReference type="OrthoDB" id="9797176at2"/>
<dbReference type="PhylomeDB" id="P0ACG8"/>
<dbReference type="BioCyc" id="EcoCyc:G7743-MONOMER"/>
<dbReference type="EvolutionaryTrace" id="P0ACG8"/>
<dbReference type="PRO" id="PR:P0ACG8"/>
<dbReference type="Proteomes" id="UP000000625">
    <property type="component" value="Chromosome"/>
</dbReference>
<dbReference type="GO" id="GO:0005829">
    <property type="term" value="C:cytosol"/>
    <property type="evidence" value="ECO:0000314"/>
    <property type="project" value="EcoCyc"/>
</dbReference>
<dbReference type="GO" id="GO:0003677">
    <property type="term" value="F:DNA binding"/>
    <property type="evidence" value="ECO:0000314"/>
    <property type="project" value="EcoCyc"/>
</dbReference>
<dbReference type="GO" id="GO:0043023">
    <property type="term" value="F:ribosomal large subunit binding"/>
    <property type="evidence" value="ECO:0000314"/>
    <property type="project" value="EcoCyc"/>
</dbReference>
<dbReference type="GO" id="GO:0003727">
    <property type="term" value="F:single-stranded RNA binding"/>
    <property type="evidence" value="ECO:0000314"/>
    <property type="project" value="EcoCyc"/>
</dbReference>
<dbReference type="GO" id="GO:0034605">
    <property type="term" value="P:cellular response to heat"/>
    <property type="evidence" value="ECO:0000270"/>
    <property type="project" value="EcoCyc"/>
</dbReference>
<dbReference type="GO" id="GO:0009408">
    <property type="term" value="P:response to heat"/>
    <property type="evidence" value="ECO:0000270"/>
    <property type="project" value="EcoliWiki"/>
</dbReference>
<dbReference type="CDD" id="cd00165">
    <property type="entry name" value="S4"/>
    <property type="match status" value="1"/>
</dbReference>
<dbReference type="FunFam" id="3.10.290.10:FF:000008">
    <property type="entry name" value="Heat shock protein 15"/>
    <property type="match status" value="1"/>
</dbReference>
<dbReference type="Gene3D" id="3.10.290.10">
    <property type="entry name" value="RNA-binding S4 domain"/>
    <property type="match status" value="1"/>
</dbReference>
<dbReference type="InterPro" id="IPR025708">
    <property type="entry name" value="HSP15"/>
</dbReference>
<dbReference type="InterPro" id="IPR002942">
    <property type="entry name" value="S4_RNA-bd"/>
</dbReference>
<dbReference type="InterPro" id="IPR036986">
    <property type="entry name" value="S4_RNA-bd_sf"/>
</dbReference>
<dbReference type="NCBIfam" id="NF007673">
    <property type="entry name" value="PRK10348.1"/>
    <property type="match status" value="1"/>
</dbReference>
<dbReference type="Pfam" id="PF01479">
    <property type="entry name" value="S4"/>
    <property type="match status" value="1"/>
</dbReference>
<dbReference type="PIRSF" id="PIRSF016821">
    <property type="entry name" value="HSP15"/>
    <property type="match status" value="1"/>
</dbReference>
<dbReference type="SMART" id="SM00363">
    <property type="entry name" value="S4"/>
    <property type="match status" value="1"/>
</dbReference>
<dbReference type="SUPFAM" id="SSF55174">
    <property type="entry name" value="Alpha-L RNA-binding motif"/>
    <property type="match status" value="1"/>
</dbReference>
<dbReference type="PROSITE" id="PS50889">
    <property type="entry name" value="S4"/>
    <property type="match status" value="1"/>
</dbReference>
<evidence type="ECO:0000255" key="1">
    <source>
        <dbReference type="PROSITE-ProRule" id="PRU00182"/>
    </source>
</evidence>
<evidence type="ECO:0000256" key="2">
    <source>
        <dbReference type="SAM" id="MobiDB-lite"/>
    </source>
</evidence>
<evidence type="ECO:0000305" key="3"/>
<evidence type="ECO:0007829" key="4">
    <source>
        <dbReference type="PDB" id="1DM9"/>
    </source>
</evidence>
<reference key="1">
    <citation type="journal article" date="1997" name="Science">
        <title>The complete genome sequence of Escherichia coli K-12.</title>
        <authorList>
            <person name="Blattner F.R."/>
            <person name="Plunkett G. III"/>
            <person name="Bloch C.A."/>
            <person name="Perna N.T."/>
            <person name="Burland V."/>
            <person name="Riley M."/>
            <person name="Collado-Vides J."/>
            <person name="Glasner J.D."/>
            <person name="Rode C.K."/>
            <person name="Mayhew G.F."/>
            <person name="Gregor J."/>
            <person name="Davis N.W."/>
            <person name="Kirkpatrick H.A."/>
            <person name="Goeden M.A."/>
            <person name="Rose D.J."/>
            <person name="Mau B."/>
            <person name="Shao Y."/>
        </authorList>
    </citation>
    <scope>NUCLEOTIDE SEQUENCE [LARGE SCALE GENOMIC DNA]</scope>
    <source>
        <strain>K12 / MG1655 / ATCC 47076</strain>
    </source>
</reference>
<reference key="2">
    <citation type="journal article" date="2006" name="Mol. Syst. Biol.">
        <title>Highly accurate genome sequences of Escherichia coli K-12 strains MG1655 and W3110.</title>
        <authorList>
            <person name="Hayashi K."/>
            <person name="Morooka N."/>
            <person name="Yamamoto Y."/>
            <person name="Fujita K."/>
            <person name="Isono K."/>
            <person name="Choi S."/>
            <person name="Ohtsubo E."/>
            <person name="Baba T."/>
            <person name="Wanner B.L."/>
            <person name="Mori H."/>
            <person name="Horiuchi T."/>
        </authorList>
    </citation>
    <scope>NUCLEOTIDE SEQUENCE [LARGE SCALE GENOMIC DNA]</scope>
    <source>
        <strain>K12 / W3110 / ATCC 27325 / DSM 5911</strain>
    </source>
</reference>
<reference key="3">
    <citation type="journal article" date="1999" name="J. Biol. Chem.">
        <title>A new heat shock protein that binds nucleic acids.</title>
        <authorList>
            <person name="Korber P."/>
            <person name="Zander T."/>
            <person name="Herschlag D."/>
            <person name="Bardwell J.C.A."/>
        </authorList>
    </citation>
    <scope>CHARACTERIZATION</scope>
    <scope>PROTEIN SEQUENCE OF 1-9</scope>
</reference>
<reference key="4">
    <citation type="journal article" date="2000" name="EMBO J.">
        <title>Hsp15: a ribosome-associated heat shock protein.</title>
        <authorList>
            <person name="Korber P."/>
            <person name="Stahl J.M."/>
            <person name="Nierhaus K.H."/>
            <person name="Bardwell J.C.A."/>
        </authorList>
    </citation>
    <scope>CHARACTERIZATION</scope>
</reference>
<reference key="5">
    <citation type="journal article" date="2000" name="EMBO J.">
        <title>Structure of Hsp15 reveals a novel RNA-binding motif.</title>
        <authorList>
            <person name="Staker B.L."/>
            <person name="Korber P."/>
            <person name="Bardwell J.C.A."/>
            <person name="Saper M.A."/>
        </authorList>
    </citation>
    <scope>X-RAY CRYSTALLOGRAPHY (2.0 ANGSTROMS)</scope>
</reference>
<accession>P0ACG8</accession>
<accession>P45802</accession>
<accession>Q2M765</accession>
<feature type="chain" id="PRO_0000201741" description="Heat shock protein 15">
    <location>
        <begin position="1"/>
        <end position="133"/>
    </location>
</feature>
<feature type="domain" description="S4 RNA-binding" evidence="1">
    <location>
        <begin position="9"/>
        <end position="71"/>
    </location>
</feature>
<feature type="region of interest" description="Disordered" evidence="2">
    <location>
        <begin position="105"/>
        <end position="133"/>
    </location>
</feature>
<feature type="compositionally biased region" description="Basic and acidic residues" evidence="2">
    <location>
        <begin position="111"/>
        <end position="133"/>
    </location>
</feature>
<feature type="helix" evidence="4">
    <location>
        <begin position="11"/>
        <end position="17"/>
    </location>
</feature>
<feature type="strand" evidence="4">
    <location>
        <begin position="20"/>
        <end position="23"/>
    </location>
</feature>
<feature type="helix" evidence="4">
    <location>
        <begin position="24"/>
        <end position="32"/>
    </location>
</feature>
<feature type="strand" evidence="4">
    <location>
        <begin position="36"/>
        <end position="38"/>
    </location>
</feature>
<feature type="strand" evidence="4">
    <location>
        <begin position="54"/>
        <end position="59"/>
    </location>
</feature>
<feature type="strand" evidence="4">
    <location>
        <begin position="62"/>
        <end position="68"/>
    </location>
</feature>
<feature type="strand" evidence="4">
    <location>
        <begin position="70"/>
        <end position="73"/>
    </location>
</feature>
<feature type="helix" evidence="4">
    <location>
        <begin position="78"/>
        <end position="81"/>
    </location>
</feature>
<feature type="helix" evidence="4">
    <location>
        <begin position="82"/>
        <end position="84"/>
    </location>
</feature>
<feature type="strand" evidence="4">
    <location>
        <begin position="85"/>
        <end position="87"/>
    </location>
</feature>
<feature type="helix" evidence="4">
    <location>
        <begin position="89"/>
        <end position="106"/>
    </location>
</feature>
<proteinExistence type="evidence at protein level"/>
<name>HSLR_ECOLI</name>
<keyword id="KW-0002">3D-structure</keyword>
<keyword id="KW-0903">Direct protein sequencing</keyword>
<keyword id="KW-0238">DNA-binding</keyword>
<keyword id="KW-1185">Reference proteome</keyword>
<keyword id="KW-0694">RNA-binding</keyword>
<keyword id="KW-0346">Stress response</keyword>
<organism>
    <name type="scientific">Escherichia coli (strain K12)</name>
    <dbReference type="NCBI Taxonomy" id="83333"/>
    <lineage>
        <taxon>Bacteria</taxon>
        <taxon>Pseudomonadati</taxon>
        <taxon>Pseudomonadota</taxon>
        <taxon>Gammaproteobacteria</taxon>
        <taxon>Enterobacterales</taxon>
        <taxon>Enterobacteriaceae</taxon>
        <taxon>Escherichia</taxon>
    </lineage>
</organism>
<sequence>MKEKPAVEVRLDKWLWAARFYKTRALAREMIEGGKVHYNGQRSKPSKIVELNATLTLRQGNDERTVIVKAITEQRRPASEAALLYEETAESVEKREKMALARKLNALTMPHPDRRPDKKERRDLLRFKHGDSE</sequence>
<comment type="function">
    <text>Involved in the recycling of free 50S ribosomal subunits that still carry a nascent chain. Binds RNA more specifically than DNA. Binds with very high affinity to the free 50S ribosomal subunit. Does not bind it when it is part of the 70S ribosome.</text>
</comment>
<comment type="subunit">
    <text>Monomer.</text>
</comment>
<comment type="interaction">
    <interactant intactId="EBI-562824">
        <id>P0ACG8</id>
    </interactant>
    <interactant intactId="EBI-542934">
        <id>P06993</id>
        <label>malT</label>
    </interactant>
    <organismsDiffer>false</organismsDiffer>
    <experiments>2</experiments>
</comment>
<comment type="interaction">
    <interactant intactId="EBI-562824">
        <id>P0ACG8</id>
    </interactant>
    <interactant intactId="EBI-562851">
        <id>P28224</id>
        <label>mliC</label>
    </interactant>
    <organismsDiffer>false</organismsDiffer>
    <experiments>3</experiments>
</comment>
<comment type="interaction">
    <interactant intactId="EBI-562824">
        <id>P0ACG8</id>
    </interactant>
    <interactant intactId="EBI-543439">
        <id>P0A7V0</id>
        <label>rpsB</label>
    </interactant>
    <organismsDiffer>false</organismsDiffer>
    <experiments>3</experiments>
</comment>
<comment type="interaction">
    <interactant intactId="EBI-562824">
        <id>P0ACG8</id>
    </interactant>
    <interactant intactId="EBI-9131095">
        <id>Q79E92</id>
        <label>ykgN</label>
    </interactant>
    <organismsDiffer>false</organismsDiffer>
    <experiments>2</experiments>
</comment>
<comment type="induction">
    <text>By heat shock.</text>
</comment>
<comment type="similarity">
    <text evidence="3">Belongs to the HSP15 family.</text>
</comment>